<evidence type="ECO:0000255" key="1">
    <source>
        <dbReference type="HAMAP-Rule" id="MF_01855"/>
    </source>
</evidence>
<comment type="catalytic activity">
    <reaction evidence="1">
        <text>beta-D-fructose 1,6-bisphosphate + H2O = beta-D-fructose 6-phosphate + phosphate</text>
        <dbReference type="Rhea" id="RHEA:11064"/>
        <dbReference type="ChEBI" id="CHEBI:15377"/>
        <dbReference type="ChEBI" id="CHEBI:32966"/>
        <dbReference type="ChEBI" id="CHEBI:43474"/>
        <dbReference type="ChEBI" id="CHEBI:57634"/>
        <dbReference type="EC" id="3.1.3.11"/>
    </reaction>
</comment>
<comment type="cofactor">
    <cofactor evidence="1">
        <name>Mg(2+)</name>
        <dbReference type="ChEBI" id="CHEBI:18420"/>
    </cofactor>
    <text evidence="1">Binds 2 magnesium ions per subunit.</text>
</comment>
<comment type="activity regulation">
    <text>Fructose-1,6-bisphosphatase II is not light-activated.</text>
</comment>
<comment type="pathway">
    <text evidence="1">Carbohydrate biosynthesis; gluconeogenesis.</text>
</comment>
<comment type="subunit">
    <text evidence="1">Homotetramer.</text>
</comment>
<comment type="subcellular location">
    <subcellularLocation>
        <location evidence="1">Cytoplasm</location>
    </subcellularLocation>
</comment>
<comment type="miscellaneous">
    <text>There are two genes for FBPase in R.sphaeroides.</text>
</comment>
<comment type="similarity">
    <text evidence="1">Belongs to the FBPase class 1 family.</text>
</comment>
<feature type="chain" id="PRO_0000200487" description="Fructose-1,6-bisphosphatase class 1 1">
    <location>
        <begin position="1"/>
        <end position="333"/>
    </location>
</feature>
<feature type="binding site" evidence="1">
    <location>
        <position position="81"/>
    </location>
    <ligand>
        <name>Mg(2+)</name>
        <dbReference type="ChEBI" id="CHEBI:18420"/>
        <label>1</label>
    </ligand>
</feature>
<feature type="binding site" evidence="1">
    <location>
        <position position="100"/>
    </location>
    <ligand>
        <name>Mg(2+)</name>
        <dbReference type="ChEBI" id="CHEBI:18420"/>
        <label>1</label>
    </ligand>
</feature>
<feature type="binding site" evidence="1">
    <location>
        <position position="100"/>
    </location>
    <ligand>
        <name>Mg(2+)</name>
        <dbReference type="ChEBI" id="CHEBI:18420"/>
        <label>2</label>
    </ligand>
</feature>
<feature type="binding site" evidence="1">
    <location>
        <position position="102"/>
    </location>
    <ligand>
        <name>Mg(2+)</name>
        <dbReference type="ChEBI" id="CHEBI:18420"/>
        <label>1</label>
    </ligand>
</feature>
<feature type="binding site" evidence="1">
    <location>
        <begin position="103"/>
        <end position="106"/>
    </location>
    <ligand>
        <name>substrate</name>
    </ligand>
</feature>
<feature type="binding site" evidence="1">
    <location>
        <position position="103"/>
    </location>
    <ligand>
        <name>Mg(2+)</name>
        <dbReference type="ChEBI" id="CHEBI:18420"/>
        <label>2</label>
    </ligand>
</feature>
<feature type="binding site" evidence="1">
    <location>
        <position position="191"/>
    </location>
    <ligand>
        <name>substrate</name>
    </ligand>
</feature>
<feature type="binding site" evidence="1">
    <location>
        <position position="263"/>
    </location>
    <ligand>
        <name>Mg(2+)</name>
        <dbReference type="ChEBI" id="CHEBI:18420"/>
        <label>2</label>
    </ligand>
</feature>
<accession>P27994</accession>
<sequence length="333" mass="35997">MKPFPTHPDAIPAELQDVMDRLGSVAIEVANRIARGGIDEDLAGLCGTNTDGDGQKALDVIADDAFRVALEGSAVRFYASEEQDTAVTLNEAGTLALAIDPLDGSSNIDTNLSVGTTFAIWPAAPRPNPSFLRLGSELIAAGYVIYGPQVCMMVSFGKGTQKYVLDPGSRSFVLVDRAVKVPPSSTEFAINASNYRHWPKPIRAYIDDCVAGTEGPRGRNFNMRWLASLVAETHRILARGGVFLYPRDSRKGYEQGRLRYLYECAPIAFVITQAGGGATDGENPILGQTPSRLHARTPFVFGSAEKVARITAYHDLPEQETSALFGNRGLFRS</sequence>
<proteinExistence type="inferred from homology"/>
<name>F16A1_CERSP</name>
<reference key="1">
    <citation type="journal article" date="1991" name="J. Biol. Chem.">
        <title>Nucleotide sequence, transcriptional analysis, and expression of genes encoded within the form I CO2 fixation operon of Rhodobacter sphaeroides.</title>
        <authorList>
            <person name="Gibson J.L."/>
            <person name="Falcone D.L."/>
            <person name="Tabita F.R."/>
        </authorList>
    </citation>
    <scope>NUCLEOTIDE SEQUENCE [GENOMIC DNA]</scope>
</reference>
<gene>
    <name evidence="1" type="primary">fbp1</name>
    <name type="synonym">fbpA</name>
</gene>
<protein>
    <recommendedName>
        <fullName evidence="1">Fructose-1,6-bisphosphatase class 1 1</fullName>
        <shortName evidence="1">FBPase class 1 1</shortName>
        <ecNumber evidence="1">3.1.3.11</ecNumber>
    </recommendedName>
    <alternativeName>
        <fullName evidence="1">D-fructose-1,6-bisphosphate 1-phosphohydrolase class 1 1</fullName>
    </alternativeName>
</protein>
<dbReference type="EC" id="3.1.3.11" evidence="1"/>
<dbReference type="EMBL" id="M64624">
    <property type="protein sequence ID" value="AAA26112.1"/>
    <property type="molecule type" value="Genomic_DNA"/>
</dbReference>
<dbReference type="PIR" id="A40767">
    <property type="entry name" value="PARFAS"/>
</dbReference>
<dbReference type="SMR" id="P27994"/>
<dbReference type="UniPathway" id="UPA00138"/>
<dbReference type="GO" id="GO:0005829">
    <property type="term" value="C:cytosol"/>
    <property type="evidence" value="ECO:0007669"/>
    <property type="project" value="TreeGrafter"/>
</dbReference>
<dbReference type="GO" id="GO:0042132">
    <property type="term" value="F:fructose 1,6-bisphosphate 1-phosphatase activity"/>
    <property type="evidence" value="ECO:0007669"/>
    <property type="project" value="UniProtKB-UniRule"/>
</dbReference>
<dbReference type="GO" id="GO:0000287">
    <property type="term" value="F:magnesium ion binding"/>
    <property type="evidence" value="ECO:0007669"/>
    <property type="project" value="UniProtKB-UniRule"/>
</dbReference>
<dbReference type="GO" id="GO:0030388">
    <property type="term" value="P:fructose 1,6-bisphosphate metabolic process"/>
    <property type="evidence" value="ECO:0007669"/>
    <property type="project" value="TreeGrafter"/>
</dbReference>
<dbReference type="GO" id="GO:0006002">
    <property type="term" value="P:fructose 6-phosphate metabolic process"/>
    <property type="evidence" value="ECO:0007669"/>
    <property type="project" value="TreeGrafter"/>
</dbReference>
<dbReference type="GO" id="GO:0006000">
    <property type="term" value="P:fructose metabolic process"/>
    <property type="evidence" value="ECO:0007669"/>
    <property type="project" value="TreeGrafter"/>
</dbReference>
<dbReference type="GO" id="GO:0006094">
    <property type="term" value="P:gluconeogenesis"/>
    <property type="evidence" value="ECO:0007669"/>
    <property type="project" value="UniProtKB-UniRule"/>
</dbReference>
<dbReference type="GO" id="GO:0005986">
    <property type="term" value="P:sucrose biosynthetic process"/>
    <property type="evidence" value="ECO:0007669"/>
    <property type="project" value="TreeGrafter"/>
</dbReference>
<dbReference type="CDD" id="cd00354">
    <property type="entry name" value="FBPase"/>
    <property type="match status" value="1"/>
</dbReference>
<dbReference type="FunFam" id="3.40.190.80:FF:000011">
    <property type="entry name" value="Fructose-1,6-bisphosphatase class 1"/>
    <property type="match status" value="1"/>
</dbReference>
<dbReference type="Gene3D" id="3.40.190.80">
    <property type="match status" value="1"/>
</dbReference>
<dbReference type="Gene3D" id="3.30.540.10">
    <property type="entry name" value="Fructose-1,6-Bisphosphatase, subunit A, domain 1"/>
    <property type="match status" value="1"/>
</dbReference>
<dbReference type="HAMAP" id="MF_01855">
    <property type="entry name" value="FBPase_class1"/>
    <property type="match status" value="1"/>
</dbReference>
<dbReference type="InterPro" id="IPR044015">
    <property type="entry name" value="FBPase_C_dom"/>
</dbReference>
<dbReference type="InterPro" id="IPR000146">
    <property type="entry name" value="FBPase_class-1"/>
</dbReference>
<dbReference type="InterPro" id="IPR033391">
    <property type="entry name" value="FBPase_N"/>
</dbReference>
<dbReference type="InterPro" id="IPR028343">
    <property type="entry name" value="FBPtase"/>
</dbReference>
<dbReference type="InterPro" id="IPR020548">
    <property type="entry name" value="Fructose_bisphosphatase_AS"/>
</dbReference>
<dbReference type="NCBIfam" id="NF006780">
    <property type="entry name" value="PRK09293.1-4"/>
    <property type="match status" value="1"/>
</dbReference>
<dbReference type="PANTHER" id="PTHR11556">
    <property type="entry name" value="FRUCTOSE-1,6-BISPHOSPHATASE-RELATED"/>
    <property type="match status" value="1"/>
</dbReference>
<dbReference type="PANTHER" id="PTHR11556:SF35">
    <property type="entry name" value="SEDOHEPTULOSE-1,7-BISPHOSPHATASE, CHLOROPLASTIC"/>
    <property type="match status" value="1"/>
</dbReference>
<dbReference type="Pfam" id="PF00316">
    <property type="entry name" value="FBPase"/>
    <property type="match status" value="1"/>
</dbReference>
<dbReference type="Pfam" id="PF18913">
    <property type="entry name" value="FBPase_C"/>
    <property type="match status" value="1"/>
</dbReference>
<dbReference type="PIRSF" id="PIRSF500210">
    <property type="entry name" value="FBPtase"/>
    <property type="match status" value="1"/>
</dbReference>
<dbReference type="PIRSF" id="PIRSF000904">
    <property type="entry name" value="FBPtase_SBPase"/>
    <property type="match status" value="1"/>
</dbReference>
<dbReference type="PRINTS" id="PR00115">
    <property type="entry name" value="F16BPHPHTASE"/>
</dbReference>
<dbReference type="SUPFAM" id="SSF56655">
    <property type="entry name" value="Carbohydrate phosphatase"/>
    <property type="match status" value="1"/>
</dbReference>
<dbReference type="PROSITE" id="PS00124">
    <property type="entry name" value="FBPASE"/>
    <property type="match status" value="1"/>
</dbReference>
<organism>
    <name type="scientific">Cereibacter sphaeroides</name>
    <name type="common">Rhodobacter sphaeroides</name>
    <dbReference type="NCBI Taxonomy" id="1063"/>
    <lineage>
        <taxon>Bacteria</taxon>
        <taxon>Pseudomonadati</taxon>
        <taxon>Pseudomonadota</taxon>
        <taxon>Alphaproteobacteria</taxon>
        <taxon>Rhodobacterales</taxon>
        <taxon>Paracoccaceae</taxon>
        <taxon>Cereibacter</taxon>
    </lineage>
</organism>
<keyword id="KW-0119">Carbohydrate metabolism</keyword>
<keyword id="KW-0963">Cytoplasm</keyword>
<keyword id="KW-0378">Hydrolase</keyword>
<keyword id="KW-0460">Magnesium</keyword>
<keyword id="KW-0479">Metal-binding</keyword>